<reference key="1">
    <citation type="journal article" date="2001" name="Science">
        <title>Comparative genomics of Listeria species.</title>
        <authorList>
            <person name="Glaser P."/>
            <person name="Frangeul L."/>
            <person name="Buchrieser C."/>
            <person name="Rusniok C."/>
            <person name="Amend A."/>
            <person name="Baquero F."/>
            <person name="Berche P."/>
            <person name="Bloecker H."/>
            <person name="Brandt P."/>
            <person name="Chakraborty T."/>
            <person name="Charbit A."/>
            <person name="Chetouani F."/>
            <person name="Couve E."/>
            <person name="de Daruvar A."/>
            <person name="Dehoux P."/>
            <person name="Domann E."/>
            <person name="Dominguez-Bernal G."/>
            <person name="Duchaud E."/>
            <person name="Durant L."/>
            <person name="Dussurget O."/>
            <person name="Entian K.-D."/>
            <person name="Fsihi H."/>
            <person name="Garcia-del Portillo F."/>
            <person name="Garrido P."/>
            <person name="Gautier L."/>
            <person name="Goebel W."/>
            <person name="Gomez-Lopez N."/>
            <person name="Hain T."/>
            <person name="Hauf J."/>
            <person name="Jackson D."/>
            <person name="Jones L.-M."/>
            <person name="Kaerst U."/>
            <person name="Kreft J."/>
            <person name="Kuhn M."/>
            <person name="Kunst F."/>
            <person name="Kurapkat G."/>
            <person name="Madueno E."/>
            <person name="Maitournam A."/>
            <person name="Mata Vicente J."/>
            <person name="Ng E."/>
            <person name="Nedjari H."/>
            <person name="Nordsiek G."/>
            <person name="Novella S."/>
            <person name="de Pablos B."/>
            <person name="Perez-Diaz J.-C."/>
            <person name="Purcell R."/>
            <person name="Remmel B."/>
            <person name="Rose M."/>
            <person name="Schlueter T."/>
            <person name="Simoes N."/>
            <person name="Tierrez A."/>
            <person name="Vazquez-Boland J.-A."/>
            <person name="Voss H."/>
            <person name="Wehland J."/>
            <person name="Cossart P."/>
        </authorList>
    </citation>
    <scope>NUCLEOTIDE SEQUENCE [LARGE SCALE GENOMIC DNA]</scope>
    <source>
        <strain>ATCC BAA-679 / EGD-e</strain>
    </source>
</reference>
<gene>
    <name evidence="1" type="primary">tyrS</name>
    <name type="ordered locus">lmo1598</name>
</gene>
<keyword id="KW-0030">Aminoacyl-tRNA synthetase</keyword>
<keyword id="KW-0067">ATP-binding</keyword>
<keyword id="KW-0963">Cytoplasm</keyword>
<keyword id="KW-0436">Ligase</keyword>
<keyword id="KW-0547">Nucleotide-binding</keyword>
<keyword id="KW-0648">Protein biosynthesis</keyword>
<keyword id="KW-1185">Reference proteome</keyword>
<keyword id="KW-0694">RNA-binding</keyword>
<sequence length="419" mass="47594">MNIIDELEWRGAIYQQTDEEGLRKWVEEKQISLYCGIDPSGDSMHIGHLIPFMILRRFQNAGHRPIILVGGATGTIGDPSGKKEERKLQSMEQISKNVESLRVQLGKIFDFEGNSAASMVNNYDWTKDVSILDFLRDYGKEFNVNTMLSKDIVASRLEVGISFTEFAYQILQAMDFNHLYEFNDCRLQIGGSDQWGNITAGLDLIRKKQGENAKAFGLTIPLLTKADGTKFGKSEGGAIWLNPEKTTPYEFYQFWINTDDRDVVKYLKYFTFLTEAEIDELAKQVETEPHLRAAQKTLAAEMTKFVHSEEALEQALKISKALFSGDVKALTADEIEQGFKDVPTFVAEDSEANLVDWLVTLGIEPSKRQAREDVGNGAIYINGERQQDLEKIMDASDRIENKFTIVRRGKKKYFLVSYK</sequence>
<proteinExistence type="inferred from homology"/>
<protein>
    <recommendedName>
        <fullName evidence="1">Tyrosine--tRNA ligase</fullName>
        <ecNumber evidence="1">6.1.1.1</ecNumber>
    </recommendedName>
    <alternativeName>
        <fullName evidence="1">Tyrosyl-tRNA synthetase</fullName>
        <shortName evidence="1">TyrRS</shortName>
    </alternativeName>
</protein>
<organism>
    <name type="scientific">Listeria monocytogenes serovar 1/2a (strain ATCC BAA-679 / EGD-e)</name>
    <dbReference type="NCBI Taxonomy" id="169963"/>
    <lineage>
        <taxon>Bacteria</taxon>
        <taxon>Bacillati</taxon>
        <taxon>Bacillota</taxon>
        <taxon>Bacilli</taxon>
        <taxon>Bacillales</taxon>
        <taxon>Listeriaceae</taxon>
        <taxon>Listeria</taxon>
    </lineage>
</organism>
<name>SYY_LISMO</name>
<evidence type="ECO:0000255" key="1">
    <source>
        <dbReference type="HAMAP-Rule" id="MF_02006"/>
    </source>
</evidence>
<comment type="function">
    <text evidence="1">Catalyzes the attachment of tyrosine to tRNA(Tyr) in a two-step reaction: tyrosine is first activated by ATP to form Tyr-AMP and then transferred to the acceptor end of tRNA(Tyr).</text>
</comment>
<comment type="catalytic activity">
    <reaction evidence="1">
        <text>tRNA(Tyr) + L-tyrosine + ATP = L-tyrosyl-tRNA(Tyr) + AMP + diphosphate + H(+)</text>
        <dbReference type="Rhea" id="RHEA:10220"/>
        <dbReference type="Rhea" id="RHEA-COMP:9706"/>
        <dbReference type="Rhea" id="RHEA-COMP:9707"/>
        <dbReference type="ChEBI" id="CHEBI:15378"/>
        <dbReference type="ChEBI" id="CHEBI:30616"/>
        <dbReference type="ChEBI" id="CHEBI:33019"/>
        <dbReference type="ChEBI" id="CHEBI:58315"/>
        <dbReference type="ChEBI" id="CHEBI:78442"/>
        <dbReference type="ChEBI" id="CHEBI:78536"/>
        <dbReference type="ChEBI" id="CHEBI:456215"/>
        <dbReference type="EC" id="6.1.1.1"/>
    </reaction>
</comment>
<comment type="subunit">
    <text evidence="1">Homodimer.</text>
</comment>
<comment type="subcellular location">
    <subcellularLocation>
        <location evidence="1">Cytoplasm</location>
    </subcellularLocation>
</comment>
<comment type="similarity">
    <text evidence="1">Belongs to the class-I aminoacyl-tRNA synthetase family. TyrS type 1 subfamily.</text>
</comment>
<feature type="chain" id="PRO_0000234723" description="Tyrosine--tRNA ligase">
    <location>
        <begin position="1"/>
        <end position="419"/>
    </location>
</feature>
<feature type="domain" description="S4 RNA-binding" evidence="1">
    <location>
        <begin position="352"/>
        <end position="418"/>
    </location>
</feature>
<feature type="short sequence motif" description="'HIGH' region">
    <location>
        <begin position="39"/>
        <end position="48"/>
    </location>
</feature>
<feature type="short sequence motif" description="'KMSKS' region">
    <location>
        <begin position="230"/>
        <end position="234"/>
    </location>
</feature>
<feature type="binding site" evidence="1">
    <location>
        <position position="34"/>
    </location>
    <ligand>
        <name>L-tyrosine</name>
        <dbReference type="ChEBI" id="CHEBI:58315"/>
    </ligand>
</feature>
<feature type="binding site" evidence="1">
    <location>
        <position position="168"/>
    </location>
    <ligand>
        <name>L-tyrosine</name>
        <dbReference type="ChEBI" id="CHEBI:58315"/>
    </ligand>
</feature>
<feature type="binding site" evidence="1">
    <location>
        <position position="172"/>
    </location>
    <ligand>
        <name>L-tyrosine</name>
        <dbReference type="ChEBI" id="CHEBI:58315"/>
    </ligand>
</feature>
<feature type="binding site" evidence="1">
    <location>
        <position position="233"/>
    </location>
    <ligand>
        <name>ATP</name>
        <dbReference type="ChEBI" id="CHEBI:30616"/>
    </ligand>
</feature>
<accession>Q8Y6T4</accession>
<dbReference type="EC" id="6.1.1.1" evidence="1"/>
<dbReference type="EMBL" id="AL591979">
    <property type="protein sequence ID" value="CAC99676.1"/>
    <property type="molecule type" value="Genomic_DNA"/>
</dbReference>
<dbReference type="PIR" id="AF1274">
    <property type="entry name" value="AF1274"/>
</dbReference>
<dbReference type="RefSeq" id="NP_465123.1">
    <property type="nucleotide sequence ID" value="NC_003210.1"/>
</dbReference>
<dbReference type="RefSeq" id="WP_003727370.1">
    <property type="nucleotide sequence ID" value="NZ_CP149495.1"/>
</dbReference>
<dbReference type="SMR" id="Q8Y6T4"/>
<dbReference type="STRING" id="169963.gene:17594255"/>
<dbReference type="PaxDb" id="169963-lmo1598"/>
<dbReference type="EnsemblBacteria" id="CAC99676">
    <property type="protein sequence ID" value="CAC99676"/>
    <property type="gene ID" value="CAC99676"/>
</dbReference>
<dbReference type="GeneID" id="985752"/>
<dbReference type="KEGG" id="lmo:lmo1598"/>
<dbReference type="PATRIC" id="fig|169963.11.peg.1641"/>
<dbReference type="eggNOG" id="COG0162">
    <property type="taxonomic scope" value="Bacteria"/>
</dbReference>
<dbReference type="HOGENOM" id="CLU_024003_0_3_9"/>
<dbReference type="OrthoDB" id="9804243at2"/>
<dbReference type="PhylomeDB" id="Q8Y6T4"/>
<dbReference type="BioCyc" id="LMON169963:LMO1598-MONOMER"/>
<dbReference type="Proteomes" id="UP000000817">
    <property type="component" value="Chromosome"/>
</dbReference>
<dbReference type="GO" id="GO:0005829">
    <property type="term" value="C:cytosol"/>
    <property type="evidence" value="ECO:0000318"/>
    <property type="project" value="GO_Central"/>
</dbReference>
<dbReference type="GO" id="GO:0005524">
    <property type="term" value="F:ATP binding"/>
    <property type="evidence" value="ECO:0007669"/>
    <property type="project" value="UniProtKB-UniRule"/>
</dbReference>
<dbReference type="GO" id="GO:0003723">
    <property type="term" value="F:RNA binding"/>
    <property type="evidence" value="ECO:0007669"/>
    <property type="project" value="UniProtKB-KW"/>
</dbReference>
<dbReference type="GO" id="GO:0004831">
    <property type="term" value="F:tyrosine-tRNA ligase activity"/>
    <property type="evidence" value="ECO:0000318"/>
    <property type="project" value="GO_Central"/>
</dbReference>
<dbReference type="GO" id="GO:0043039">
    <property type="term" value="P:tRNA aminoacylation"/>
    <property type="evidence" value="ECO:0000318"/>
    <property type="project" value="GO_Central"/>
</dbReference>
<dbReference type="GO" id="GO:0006437">
    <property type="term" value="P:tyrosyl-tRNA aminoacylation"/>
    <property type="evidence" value="ECO:0007669"/>
    <property type="project" value="UniProtKB-UniRule"/>
</dbReference>
<dbReference type="CDD" id="cd00165">
    <property type="entry name" value="S4"/>
    <property type="match status" value="1"/>
</dbReference>
<dbReference type="CDD" id="cd00805">
    <property type="entry name" value="TyrRS_core"/>
    <property type="match status" value="1"/>
</dbReference>
<dbReference type="FunFam" id="1.10.240.10:FF:000001">
    <property type="entry name" value="Tyrosine--tRNA ligase"/>
    <property type="match status" value="1"/>
</dbReference>
<dbReference type="FunFam" id="3.10.290.10:FF:000012">
    <property type="entry name" value="Tyrosine--tRNA ligase"/>
    <property type="match status" value="1"/>
</dbReference>
<dbReference type="FunFam" id="3.40.50.620:FF:000008">
    <property type="entry name" value="Tyrosine--tRNA ligase"/>
    <property type="match status" value="1"/>
</dbReference>
<dbReference type="Gene3D" id="3.40.50.620">
    <property type="entry name" value="HUPs"/>
    <property type="match status" value="1"/>
</dbReference>
<dbReference type="Gene3D" id="3.10.290.10">
    <property type="entry name" value="RNA-binding S4 domain"/>
    <property type="match status" value="1"/>
</dbReference>
<dbReference type="Gene3D" id="1.10.240.10">
    <property type="entry name" value="Tyrosyl-Transfer RNA Synthetase"/>
    <property type="match status" value="1"/>
</dbReference>
<dbReference type="HAMAP" id="MF_02006">
    <property type="entry name" value="Tyr_tRNA_synth_type1"/>
    <property type="match status" value="1"/>
</dbReference>
<dbReference type="InterPro" id="IPR001412">
    <property type="entry name" value="aa-tRNA-synth_I_CS"/>
</dbReference>
<dbReference type="InterPro" id="IPR002305">
    <property type="entry name" value="aa-tRNA-synth_Ic"/>
</dbReference>
<dbReference type="InterPro" id="IPR014729">
    <property type="entry name" value="Rossmann-like_a/b/a_fold"/>
</dbReference>
<dbReference type="InterPro" id="IPR002942">
    <property type="entry name" value="S4_RNA-bd"/>
</dbReference>
<dbReference type="InterPro" id="IPR036986">
    <property type="entry name" value="S4_RNA-bd_sf"/>
</dbReference>
<dbReference type="InterPro" id="IPR054608">
    <property type="entry name" value="SYY-like_C"/>
</dbReference>
<dbReference type="InterPro" id="IPR002307">
    <property type="entry name" value="Tyr-tRNA-ligase"/>
</dbReference>
<dbReference type="InterPro" id="IPR024088">
    <property type="entry name" value="Tyr-tRNA-ligase_bac-type"/>
</dbReference>
<dbReference type="InterPro" id="IPR024107">
    <property type="entry name" value="Tyr-tRNA-ligase_bac_1"/>
</dbReference>
<dbReference type="NCBIfam" id="TIGR00234">
    <property type="entry name" value="tyrS"/>
    <property type="match status" value="1"/>
</dbReference>
<dbReference type="PANTHER" id="PTHR11766:SF0">
    <property type="entry name" value="TYROSINE--TRNA LIGASE, MITOCHONDRIAL"/>
    <property type="match status" value="1"/>
</dbReference>
<dbReference type="PANTHER" id="PTHR11766">
    <property type="entry name" value="TYROSYL-TRNA SYNTHETASE"/>
    <property type="match status" value="1"/>
</dbReference>
<dbReference type="Pfam" id="PF22421">
    <property type="entry name" value="SYY_C-terminal"/>
    <property type="match status" value="1"/>
</dbReference>
<dbReference type="Pfam" id="PF00579">
    <property type="entry name" value="tRNA-synt_1b"/>
    <property type="match status" value="1"/>
</dbReference>
<dbReference type="PRINTS" id="PR01040">
    <property type="entry name" value="TRNASYNTHTYR"/>
</dbReference>
<dbReference type="SMART" id="SM00363">
    <property type="entry name" value="S4"/>
    <property type="match status" value="1"/>
</dbReference>
<dbReference type="SUPFAM" id="SSF55174">
    <property type="entry name" value="Alpha-L RNA-binding motif"/>
    <property type="match status" value="1"/>
</dbReference>
<dbReference type="SUPFAM" id="SSF52374">
    <property type="entry name" value="Nucleotidylyl transferase"/>
    <property type="match status" value="1"/>
</dbReference>
<dbReference type="PROSITE" id="PS00178">
    <property type="entry name" value="AA_TRNA_LIGASE_I"/>
    <property type="match status" value="1"/>
</dbReference>
<dbReference type="PROSITE" id="PS50889">
    <property type="entry name" value="S4"/>
    <property type="match status" value="1"/>
</dbReference>